<feature type="chain" id="PRO_0000257340" description="Ribosomal RNA small subunit methyltransferase A">
    <location>
        <begin position="1"/>
        <end position="280"/>
    </location>
</feature>
<feature type="binding site" evidence="1">
    <location>
        <position position="28"/>
    </location>
    <ligand>
        <name>S-adenosyl-L-methionine</name>
        <dbReference type="ChEBI" id="CHEBI:59789"/>
    </ligand>
</feature>
<feature type="binding site" evidence="1">
    <location>
        <position position="30"/>
    </location>
    <ligand>
        <name>S-adenosyl-L-methionine</name>
        <dbReference type="ChEBI" id="CHEBI:59789"/>
    </ligand>
</feature>
<feature type="binding site" evidence="1">
    <location>
        <position position="55"/>
    </location>
    <ligand>
        <name>S-adenosyl-L-methionine</name>
        <dbReference type="ChEBI" id="CHEBI:59789"/>
    </ligand>
</feature>
<feature type="binding site" evidence="1">
    <location>
        <position position="77"/>
    </location>
    <ligand>
        <name>S-adenosyl-L-methionine</name>
        <dbReference type="ChEBI" id="CHEBI:59789"/>
    </ligand>
</feature>
<feature type="binding site" evidence="1">
    <location>
        <position position="103"/>
    </location>
    <ligand>
        <name>S-adenosyl-L-methionine</name>
        <dbReference type="ChEBI" id="CHEBI:59789"/>
    </ligand>
</feature>
<feature type="binding site" evidence="1">
    <location>
        <position position="122"/>
    </location>
    <ligand>
        <name>S-adenosyl-L-methionine</name>
        <dbReference type="ChEBI" id="CHEBI:59789"/>
    </ligand>
</feature>
<name>RSMA_ROSDO</name>
<protein>
    <recommendedName>
        <fullName evidence="1">Ribosomal RNA small subunit methyltransferase A</fullName>
        <ecNumber evidence="1">2.1.1.182</ecNumber>
    </recommendedName>
    <alternativeName>
        <fullName evidence="1">16S rRNA (adenine(1518)-N(6)/adenine(1519)-N(6))-dimethyltransferase</fullName>
    </alternativeName>
    <alternativeName>
        <fullName evidence="1">16S rRNA dimethyladenosine transferase</fullName>
    </alternativeName>
    <alternativeName>
        <fullName evidence="1">16S rRNA dimethylase</fullName>
    </alternativeName>
    <alternativeName>
        <fullName evidence="1">S-adenosylmethionine-6-N', N'-adenosyl(rRNA) dimethyltransferase</fullName>
    </alternativeName>
</protein>
<organism>
    <name type="scientific">Roseobacter denitrificans (strain ATCC 33942 / OCh 114)</name>
    <name type="common">Erythrobacter sp. (strain OCh 114)</name>
    <name type="synonym">Roseobacter denitrificans</name>
    <dbReference type="NCBI Taxonomy" id="375451"/>
    <lineage>
        <taxon>Bacteria</taxon>
        <taxon>Pseudomonadati</taxon>
        <taxon>Pseudomonadota</taxon>
        <taxon>Alphaproteobacteria</taxon>
        <taxon>Rhodobacterales</taxon>
        <taxon>Roseobacteraceae</taxon>
        <taxon>Roseobacter</taxon>
    </lineage>
</organism>
<reference key="1">
    <citation type="journal article" date="2007" name="J. Bacteriol.">
        <title>The complete genome sequence of Roseobacter denitrificans reveals a mixotrophic rather than photosynthetic metabolism.</title>
        <authorList>
            <person name="Swingley W.D."/>
            <person name="Sadekar S."/>
            <person name="Mastrian S.D."/>
            <person name="Matthies H.J."/>
            <person name="Hao J."/>
            <person name="Ramos H."/>
            <person name="Acharya C.R."/>
            <person name="Conrad A.L."/>
            <person name="Taylor H.L."/>
            <person name="Dejesa L.C."/>
            <person name="Shah M.K."/>
            <person name="O'Huallachain M.E."/>
            <person name="Lince M.T."/>
            <person name="Blankenship R.E."/>
            <person name="Beatty J.T."/>
            <person name="Touchman J.W."/>
        </authorList>
    </citation>
    <scope>NUCLEOTIDE SEQUENCE [LARGE SCALE GENOMIC DNA]</scope>
    <source>
        <strain>ATCC 33942 / OCh 114</strain>
    </source>
</reference>
<proteinExistence type="inferred from homology"/>
<accession>Q164G1</accession>
<gene>
    <name evidence="1" type="primary">rsmA</name>
    <name evidence="1" type="synonym">ksgA</name>
    <name type="ordered locus">RD1_3124</name>
</gene>
<keyword id="KW-0963">Cytoplasm</keyword>
<keyword id="KW-0489">Methyltransferase</keyword>
<keyword id="KW-1185">Reference proteome</keyword>
<keyword id="KW-0694">RNA-binding</keyword>
<keyword id="KW-0698">rRNA processing</keyword>
<keyword id="KW-0949">S-adenosyl-L-methionine</keyword>
<keyword id="KW-0808">Transferase</keyword>
<sequence>MSTIDHLPPLRSVIRDHDLSARKSMGQNFLLDLNLTAKIARQAGDLSACDVLEIGPGPGGLTRGLLAQGARRVLAIEKDARCLPALAEIAAVYPGRLEVMNGDALEIDPLSALTPPIRVAANLPYNVGTELLVRWLTPQIWPPYWQSLTLMFQREVAERIVARPGSKAYGRLAILAQWRADARIVMQLPPDAFTPPPKVSSSVVQITALPAPRYPADPYVLSKVVAMAFNQRRKMLRAALKGLGPDIEDRLLAAGIEPTERAERVSLEGFCALARAVAAT</sequence>
<evidence type="ECO:0000255" key="1">
    <source>
        <dbReference type="HAMAP-Rule" id="MF_00607"/>
    </source>
</evidence>
<comment type="function">
    <text evidence="1">Specifically dimethylates two adjacent adenosines (A1518 and A1519) in the loop of a conserved hairpin near the 3'-end of 16S rRNA in the 30S particle. May play a critical role in biogenesis of 30S subunits.</text>
</comment>
<comment type="catalytic activity">
    <reaction evidence="1">
        <text>adenosine(1518)/adenosine(1519) in 16S rRNA + 4 S-adenosyl-L-methionine = N(6)-dimethyladenosine(1518)/N(6)-dimethyladenosine(1519) in 16S rRNA + 4 S-adenosyl-L-homocysteine + 4 H(+)</text>
        <dbReference type="Rhea" id="RHEA:19609"/>
        <dbReference type="Rhea" id="RHEA-COMP:10232"/>
        <dbReference type="Rhea" id="RHEA-COMP:10233"/>
        <dbReference type="ChEBI" id="CHEBI:15378"/>
        <dbReference type="ChEBI" id="CHEBI:57856"/>
        <dbReference type="ChEBI" id="CHEBI:59789"/>
        <dbReference type="ChEBI" id="CHEBI:74411"/>
        <dbReference type="ChEBI" id="CHEBI:74493"/>
        <dbReference type="EC" id="2.1.1.182"/>
    </reaction>
</comment>
<comment type="subcellular location">
    <subcellularLocation>
        <location evidence="1">Cytoplasm</location>
    </subcellularLocation>
</comment>
<comment type="similarity">
    <text evidence="1">Belongs to the class I-like SAM-binding methyltransferase superfamily. rRNA adenine N(6)-methyltransferase family. RsmA subfamily.</text>
</comment>
<dbReference type="EC" id="2.1.1.182" evidence="1"/>
<dbReference type="EMBL" id="CP000362">
    <property type="protein sequence ID" value="ABG32632.1"/>
    <property type="molecule type" value="Genomic_DNA"/>
</dbReference>
<dbReference type="RefSeq" id="WP_011569248.1">
    <property type="nucleotide sequence ID" value="NC_008209.1"/>
</dbReference>
<dbReference type="SMR" id="Q164G1"/>
<dbReference type="STRING" id="375451.RD1_3124"/>
<dbReference type="KEGG" id="rde:RD1_3124"/>
<dbReference type="eggNOG" id="COG0030">
    <property type="taxonomic scope" value="Bacteria"/>
</dbReference>
<dbReference type="HOGENOM" id="CLU_041220_0_1_5"/>
<dbReference type="OrthoDB" id="9814755at2"/>
<dbReference type="Proteomes" id="UP000007029">
    <property type="component" value="Chromosome"/>
</dbReference>
<dbReference type="GO" id="GO:0005829">
    <property type="term" value="C:cytosol"/>
    <property type="evidence" value="ECO:0007669"/>
    <property type="project" value="TreeGrafter"/>
</dbReference>
<dbReference type="GO" id="GO:0052908">
    <property type="term" value="F:16S rRNA (adenine(1518)-N(6)/adenine(1519)-N(6))-dimethyltransferase activity"/>
    <property type="evidence" value="ECO:0007669"/>
    <property type="project" value="UniProtKB-EC"/>
</dbReference>
<dbReference type="GO" id="GO:0003723">
    <property type="term" value="F:RNA binding"/>
    <property type="evidence" value="ECO:0007669"/>
    <property type="project" value="UniProtKB-KW"/>
</dbReference>
<dbReference type="CDD" id="cd02440">
    <property type="entry name" value="AdoMet_MTases"/>
    <property type="match status" value="1"/>
</dbReference>
<dbReference type="FunFam" id="1.10.8.100:FF:000001">
    <property type="entry name" value="Ribosomal RNA small subunit methyltransferase A"/>
    <property type="match status" value="1"/>
</dbReference>
<dbReference type="Gene3D" id="1.10.8.100">
    <property type="entry name" value="Ribosomal RNA adenine dimethylase-like, domain 2"/>
    <property type="match status" value="1"/>
</dbReference>
<dbReference type="Gene3D" id="3.40.50.150">
    <property type="entry name" value="Vaccinia Virus protein VP39"/>
    <property type="match status" value="1"/>
</dbReference>
<dbReference type="HAMAP" id="MF_00607">
    <property type="entry name" value="16SrRNA_methyltr_A"/>
    <property type="match status" value="1"/>
</dbReference>
<dbReference type="InterPro" id="IPR001737">
    <property type="entry name" value="KsgA/Erm"/>
</dbReference>
<dbReference type="InterPro" id="IPR023165">
    <property type="entry name" value="rRNA_Ade_diMease-like_C"/>
</dbReference>
<dbReference type="InterPro" id="IPR020596">
    <property type="entry name" value="rRNA_Ade_Mease_Trfase_CS"/>
</dbReference>
<dbReference type="InterPro" id="IPR020598">
    <property type="entry name" value="rRNA_Ade_methylase_Trfase_N"/>
</dbReference>
<dbReference type="InterPro" id="IPR011530">
    <property type="entry name" value="rRNA_adenine_dimethylase"/>
</dbReference>
<dbReference type="InterPro" id="IPR029063">
    <property type="entry name" value="SAM-dependent_MTases_sf"/>
</dbReference>
<dbReference type="NCBIfam" id="TIGR00755">
    <property type="entry name" value="ksgA"/>
    <property type="match status" value="1"/>
</dbReference>
<dbReference type="PANTHER" id="PTHR11727">
    <property type="entry name" value="DIMETHYLADENOSINE TRANSFERASE"/>
    <property type="match status" value="1"/>
</dbReference>
<dbReference type="PANTHER" id="PTHR11727:SF7">
    <property type="entry name" value="DIMETHYLADENOSINE TRANSFERASE-RELATED"/>
    <property type="match status" value="1"/>
</dbReference>
<dbReference type="Pfam" id="PF00398">
    <property type="entry name" value="RrnaAD"/>
    <property type="match status" value="1"/>
</dbReference>
<dbReference type="SMART" id="SM00650">
    <property type="entry name" value="rADc"/>
    <property type="match status" value="1"/>
</dbReference>
<dbReference type="SUPFAM" id="SSF53335">
    <property type="entry name" value="S-adenosyl-L-methionine-dependent methyltransferases"/>
    <property type="match status" value="1"/>
</dbReference>
<dbReference type="PROSITE" id="PS01131">
    <property type="entry name" value="RRNA_A_DIMETH"/>
    <property type="match status" value="1"/>
</dbReference>
<dbReference type="PROSITE" id="PS51689">
    <property type="entry name" value="SAM_RNA_A_N6_MT"/>
    <property type="match status" value="1"/>
</dbReference>